<evidence type="ECO:0000255" key="1">
    <source>
        <dbReference type="HAMAP-Rule" id="MF_04091"/>
    </source>
</evidence>
<dbReference type="EMBL" id="AB112917">
    <property type="protein sequence ID" value="BAC78398.1"/>
    <property type="molecule type" value="Genomic_RNA"/>
</dbReference>
<dbReference type="SMR" id="Q7TDX0"/>
<dbReference type="GO" id="GO:0005576">
    <property type="term" value="C:extracellular region"/>
    <property type="evidence" value="ECO:0007669"/>
    <property type="project" value="UniProtKB-SubCell"/>
</dbReference>
<dbReference type="GO" id="GO:0044155">
    <property type="term" value="C:host caveola"/>
    <property type="evidence" value="ECO:0007669"/>
    <property type="project" value="UniProtKB-SubCell"/>
</dbReference>
<dbReference type="GO" id="GO:0044169">
    <property type="term" value="C:host cell rough endoplasmic reticulum membrane"/>
    <property type="evidence" value="ECO:0007669"/>
    <property type="project" value="UniProtKB-SubCell"/>
</dbReference>
<dbReference type="GO" id="GO:0016020">
    <property type="term" value="C:membrane"/>
    <property type="evidence" value="ECO:0007669"/>
    <property type="project" value="UniProtKB-UniRule"/>
</dbReference>
<dbReference type="GO" id="GO:0015267">
    <property type="term" value="F:channel activity"/>
    <property type="evidence" value="ECO:0007669"/>
    <property type="project" value="UniProtKB-KW"/>
</dbReference>
<dbReference type="GO" id="GO:0046872">
    <property type="term" value="F:metal ion binding"/>
    <property type="evidence" value="ECO:0007669"/>
    <property type="project" value="UniProtKB-UniRule"/>
</dbReference>
<dbReference type="GO" id="GO:0090729">
    <property type="term" value="F:toxin activity"/>
    <property type="evidence" value="ECO:0007669"/>
    <property type="project" value="UniProtKB-UniRule"/>
</dbReference>
<dbReference type="GO" id="GO:0034220">
    <property type="term" value="P:monoatomic ion transmembrane transport"/>
    <property type="evidence" value="ECO:0007669"/>
    <property type="project" value="UniProtKB-KW"/>
</dbReference>
<dbReference type="GO" id="GO:0039520">
    <property type="term" value="P:symbiont-mediated activation of host autophagy"/>
    <property type="evidence" value="ECO:0007669"/>
    <property type="project" value="UniProtKB-KW"/>
</dbReference>
<dbReference type="GO" id="GO:0016032">
    <property type="term" value="P:viral process"/>
    <property type="evidence" value="ECO:0007669"/>
    <property type="project" value="UniProtKB-UniRule"/>
</dbReference>
<dbReference type="Gene3D" id="1.20.5.430">
    <property type="match status" value="1"/>
</dbReference>
<dbReference type="HAMAP" id="MF_04091">
    <property type="entry name" value="ROTA_NSP4"/>
    <property type="match status" value="1"/>
</dbReference>
<dbReference type="InterPro" id="IPR002107">
    <property type="entry name" value="Rotavirus_NSP4"/>
</dbReference>
<dbReference type="Pfam" id="PF01452">
    <property type="entry name" value="Rota_NSP4"/>
    <property type="match status" value="1"/>
</dbReference>
<dbReference type="SUPFAM" id="SSF58030">
    <property type="entry name" value="Rotavirus nonstructural proteins"/>
    <property type="match status" value="1"/>
</dbReference>
<organism>
    <name type="scientific">Rotavirus A (isolate RVA/Mouse/United States/Eb/1982/G16P10[16])</name>
    <name type="common">RV-A</name>
    <dbReference type="NCBI Taxonomy" id="578842"/>
    <lineage>
        <taxon>Viruses</taxon>
        <taxon>Riboviria</taxon>
        <taxon>Orthornavirae</taxon>
        <taxon>Duplornaviricota</taxon>
        <taxon>Resentoviricetes</taxon>
        <taxon>Reovirales</taxon>
        <taxon>Sedoreoviridae</taxon>
        <taxon>Rotavirus</taxon>
        <taxon>Rotavirus A</taxon>
    </lineage>
</organism>
<comment type="function">
    <text evidence="1">Plays an essential role in the virus replication cycle by acting as a viroporin. Creates a pore in the host endoplasmic reticulum and as a consequence releases Ca(2+) in the cytoplasm of infected cell. In turn, high levels of cytoplasmic calcium trigger membrane trafficking and transport of viral ER-associated proteins to viroplasms, sites of viral genome replication and immature particle assembly.</text>
</comment>
<comment type="function">
    <text evidence="1">The secreted form acts as an enterotoxin that causes phospholipase C-dependent elevation of the intracellular calcium concentration in host intestinal mucosa cells. Increased concentration of intracellular calcium disrupts the cytoskeleton and the tight junctions, raising the paracellular permeability. Potentiates chloride ion secretion through a calcium ion-dependent signaling pathway, inducing age-dependent diarrhea. To perform this enterotoxigenic role in vivo, NSP4 is released from infected enterocytes in a soluble form capable of diffusing within the intestinal lumen and interacting with host plasma membrane receptors on neighboring epithelial cells such as integrins ITGA1/ITGB1 and ITGA2/ITGB1.</text>
</comment>
<comment type="subunit">
    <text evidence="1">Homotetramer. Interacts with the immature particle in the viroplasm. Interacts with host CAV1, early and late in infection. Interacts with host integrin ITGA1/ITGB1 heterodimer. Interacts with host integrin ITGA2/ITGB1 heterodimer. Interaction with microtubules blocks trafficking to the Golgi apparatus.</text>
</comment>
<comment type="subcellular location">
    <subcellularLocation>
        <location evidence="1">Host rough endoplasmic reticulum membrane</location>
        <topology evidence="1">Single-pass type III membrane protein</topology>
    </subcellularLocation>
    <subcellularLocation>
        <location evidence="1">Host membrane</location>
        <location evidence="1">Host caveola</location>
        <topology evidence="1">Single-pass type III membrane protein</topology>
    </subcellularLocation>
    <subcellularLocation>
        <location evidence="1">Secreted</location>
    </subcellularLocation>
    <text evidence="1">NSP4 also localizes in vesicular structures which contain autophagosomal markers and associate with viroplasms in virus-infected cells. Additionally, a soluble form of glycosylated NSP4 is secreted despite retention of its transmembrane domain.</text>
</comment>
<comment type="domain">
    <text evidence="1">Binds 1 calcium ion per tetramer.</text>
</comment>
<comment type="PTM">
    <text evidence="1">The N-glycosyl content is primarily Man(9)GlcNAc, with a small amount of Man(8)GlcNAc.</text>
</comment>
<comment type="similarity">
    <text evidence="1">Belongs to the rotavirus NSP4 family.</text>
</comment>
<feature type="chain" id="PRO_0000369472" description="Non-structural glycoprotein 4">
    <location>
        <begin position="1"/>
        <end position="175"/>
    </location>
</feature>
<feature type="topological domain" description="Lumenal" evidence="1">
    <location>
        <begin position="1"/>
        <end position="28"/>
    </location>
</feature>
<feature type="transmembrane region" description="Helical; Signal-anchor for type III membrane protein" evidence="1">
    <location>
        <begin position="29"/>
        <end position="51"/>
    </location>
</feature>
<feature type="topological domain" description="Cytoplasmic" evidence="1">
    <location>
        <begin position="52"/>
        <end position="175"/>
    </location>
</feature>
<feature type="binding site" evidence="1">
    <location>
        <position position="120"/>
    </location>
    <ligand>
        <name>Ca(2+)</name>
        <dbReference type="ChEBI" id="CHEBI:29108"/>
    </ligand>
</feature>
<feature type="binding site" evidence="1">
    <location>
        <position position="123"/>
    </location>
    <ligand>
        <name>Ca(2+)</name>
        <dbReference type="ChEBI" id="CHEBI:29108"/>
    </ligand>
</feature>
<feature type="glycosylation site" description="N-linked (GlcNAc...) asparagine; by host" evidence="1">
    <location>
        <position position="8"/>
    </location>
</feature>
<feature type="glycosylation site" description="N-linked (GlcNAc...) asparagine; by host" evidence="1">
    <location>
        <position position="18"/>
    </location>
</feature>
<keyword id="KW-1072">Activation of host autophagy by virus</keyword>
<keyword id="KW-0106">Calcium</keyword>
<keyword id="KW-0260">Enterotoxin</keyword>
<keyword id="KW-0325">Glycoprotein</keyword>
<keyword id="KW-1038">Host endoplasmic reticulum</keyword>
<keyword id="KW-1043">Host membrane</keyword>
<keyword id="KW-0945">Host-virus interaction</keyword>
<keyword id="KW-0407">Ion channel</keyword>
<keyword id="KW-0406">Ion transport</keyword>
<keyword id="KW-0472">Membrane</keyword>
<keyword id="KW-0479">Metal-binding</keyword>
<keyword id="KW-0964">Secreted</keyword>
<keyword id="KW-0735">Signal-anchor</keyword>
<keyword id="KW-0800">Toxin</keyword>
<keyword id="KW-0812">Transmembrane</keyword>
<keyword id="KW-1133">Transmembrane helix</keyword>
<keyword id="KW-0813">Transport</keyword>
<keyword id="KW-1182">Viral ion channel</keyword>
<keyword id="KW-0843">Virulence</keyword>
<sequence length="175" mass="20532">MEKLADLNYTLGVITLLNDTLHNILEEPGMVYFPYIVSALTVLFTMHKASLPAMKLAMRTFQCSYRIIKRVVVTLINTLLRLGGYNDYLTDKDETEKQINRVVKELRQQLTMIEKLTTREIEQVELLKRIYDMMIVRHDSEIDMSKETNQKAFKTLHDWKNDRSYDDNTEVIAPL</sequence>
<accession>Q7TDX0</accession>
<name>NSP4_ROTMB</name>
<protein>
    <recommendedName>
        <fullName evidence="1">Non-structural glycoprotein 4</fullName>
        <shortName evidence="1">NSP4</shortName>
    </recommendedName>
    <alternativeName>
        <fullName evidence="1">NCVP5</fullName>
    </alternativeName>
    <alternativeName>
        <fullName evidence="1">NS28</fullName>
    </alternativeName>
</protein>
<reference key="1">
    <citation type="submission" date="2003-06" db="EMBL/GenBank/DDBJ databases">
        <title>NSP4 sequences in human, pocine, murine rotavirus strains.</title>
        <authorList>
            <person name="Honma S."/>
            <person name="Hoshino Y."/>
            <person name="Ishida S."/>
            <person name="Yuan L."/>
        </authorList>
    </citation>
    <scope>NUCLEOTIDE SEQUENCE [GENOMIC RNA]</scope>
</reference>
<organismHost>
    <name type="scientific">Mus musculus musculus</name>
    <name type="common">eastern European house mouse</name>
    <dbReference type="NCBI Taxonomy" id="39442"/>
</organismHost>
<proteinExistence type="inferred from homology"/>